<dbReference type="EMBL" id="AF077326">
    <property type="protein sequence ID" value="AAC32850.1"/>
    <property type="molecule type" value="Genomic_DNA"/>
</dbReference>
<dbReference type="RefSeq" id="WP_176703006.1">
    <property type="nucleotide sequence ID" value="NZ_AF077326.1"/>
</dbReference>
<dbReference type="PDB" id="6OWK">
    <property type="method" value="X-ray"/>
    <property type="resolution" value="2.70 A"/>
    <property type="chains" value="A=35-510"/>
</dbReference>
<dbReference type="PDBsum" id="6OWK"/>
<dbReference type="SMR" id="O85805"/>
<dbReference type="ABCD" id="O85805">
    <property type="antibodies" value="3 sequenced antibodies"/>
</dbReference>
<dbReference type="GO" id="GO:0005102">
    <property type="term" value="F:signaling receptor binding"/>
    <property type="evidence" value="ECO:0007669"/>
    <property type="project" value="InterPro"/>
</dbReference>
<dbReference type="GO" id="GO:0090729">
    <property type="term" value="F:toxin activity"/>
    <property type="evidence" value="ECO:0007669"/>
    <property type="project" value="UniProtKB-KW"/>
</dbReference>
<dbReference type="GO" id="GO:0030435">
    <property type="term" value="P:sporulation resulting in formation of a cellular spore"/>
    <property type="evidence" value="ECO:0007669"/>
    <property type="project" value="UniProtKB-KW"/>
</dbReference>
<dbReference type="GO" id="GO:0001907">
    <property type="term" value="P:symbiont-mediated killing of host cell"/>
    <property type="evidence" value="ECO:0007669"/>
    <property type="project" value="InterPro"/>
</dbReference>
<dbReference type="CDD" id="cd04085">
    <property type="entry name" value="delta_endotoxin_C"/>
    <property type="match status" value="1"/>
</dbReference>
<dbReference type="Gene3D" id="2.60.120.260">
    <property type="entry name" value="Galactose-binding domain-like"/>
    <property type="match status" value="1"/>
</dbReference>
<dbReference type="Gene3D" id="2.100.10.10">
    <property type="entry name" value="Pesticidal crystal protein, central domain"/>
    <property type="match status" value="1"/>
</dbReference>
<dbReference type="Gene3D" id="1.20.190.10">
    <property type="entry name" value="Pesticidal crystal protein, N-terminal domain"/>
    <property type="match status" value="1"/>
</dbReference>
<dbReference type="InterPro" id="IPR048645">
    <property type="entry name" value="Cry1Ac-like_dom-VII"/>
</dbReference>
<dbReference type="InterPro" id="IPR041587">
    <property type="entry name" value="Cry_V"/>
</dbReference>
<dbReference type="InterPro" id="IPR008979">
    <property type="entry name" value="Galactose-bd-like_sf"/>
</dbReference>
<dbReference type="InterPro" id="IPR038979">
    <property type="entry name" value="Pest_crys"/>
</dbReference>
<dbReference type="InterPro" id="IPR054544">
    <property type="entry name" value="Pest_crys_Cry1Aa_dom-IV"/>
</dbReference>
<dbReference type="InterPro" id="IPR005638">
    <property type="entry name" value="Pest_crys_dom-III"/>
</dbReference>
<dbReference type="InterPro" id="IPR005639">
    <property type="entry name" value="Pest_crys_dom_I"/>
</dbReference>
<dbReference type="InterPro" id="IPR036716">
    <property type="entry name" value="Pest_crys_N_sf"/>
</dbReference>
<dbReference type="InterPro" id="IPR036399">
    <property type="entry name" value="Pest_cryst_cen_dom_sf"/>
</dbReference>
<dbReference type="InterPro" id="IPR001178">
    <property type="entry name" value="Pest_cryst_dom_II"/>
</dbReference>
<dbReference type="PANTHER" id="PTHR37003">
    <property type="entry name" value="ENDOTOXIN_N DOMAIN-CONTAINING PROTEIN-RELATED"/>
    <property type="match status" value="1"/>
</dbReference>
<dbReference type="PANTHER" id="PTHR37003:SF2">
    <property type="entry name" value="PESTICIDAL CRYSTAL PROTEIN N-TERMINAL DOMAIN-CONTAINING PROTEIN"/>
    <property type="match status" value="1"/>
</dbReference>
<dbReference type="Pfam" id="PF17997">
    <property type="entry name" value="Cry1Ac_D5"/>
    <property type="match status" value="1"/>
</dbReference>
<dbReference type="Pfam" id="PF21463">
    <property type="entry name" value="Cry1Ac_dom-VII"/>
    <property type="match status" value="1"/>
</dbReference>
<dbReference type="Pfam" id="PF03944">
    <property type="entry name" value="Endotoxin_C"/>
    <property type="match status" value="1"/>
</dbReference>
<dbReference type="Pfam" id="PF18449">
    <property type="entry name" value="Endotoxin_C2"/>
    <property type="match status" value="1"/>
</dbReference>
<dbReference type="Pfam" id="PF00555">
    <property type="entry name" value="Endotoxin_M"/>
    <property type="match status" value="1"/>
</dbReference>
<dbReference type="Pfam" id="PF03945">
    <property type="entry name" value="Endotoxin_N"/>
    <property type="match status" value="1"/>
</dbReference>
<dbReference type="SUPFAM" id="SSF51096">
    <property type="entry name" value="delta-Endotoxin (insectocide), middle domain"/>
    <property type="match status" value="1"/>
</dbReference>
<dbReference type="SUPFAM" id="SSF56849">
    <property type="entry name" value="delta-Endotoxin (insectocide), N-terminal domain"/>
    <property type="match status" value="1"/>
</dbReference>
<dbReference type="SUPFAM" id="SSF49785">
    <property type="entry name" value="Galactose-binding domain-like"/>
    <property type="match status" value="1"/>
</dbReference>
<feature type="chain" id="PRO_0000174034" description="Pesticidal crystal protein Cry1Be">
    <location>
        <begin position="1"/>
        <end position="1227"/>
    </location>
</feature>
<feature type="helix" evidence="2">
    <location>
        <begin position="55"/>
        <end position="66"/>
    </location>
</feature>
<feature type="helix" evidence="2">
    <location>
        <begin position="67"/>
        <end position="69"/>
    </location>
</feature>
<feature type="helix" evidence="2">
    <location>
        <begin position="77"/>
        <end position="89"/>
    </location>
</feature>
<feature type="helix" evidence="2">
    <location>
        <begin position="96"/>
        <end position="108"/>
    </location>
</feature>
<feature type="helix" evidence="2">
    <location>
        <begin position="114"/>
        <end position="141"/>
    </location>
</feature>
<feature type="helix" evidence="2">
    <location>
        <begin position="150"/>
        <end position="171"/>
    </location>
</feature>
<feature type="turn" evidence="2">
    <location>
        <begin position="178"/>
        <end position="181"/>
    </location>
</feature>
<feature type="helix" evidence="2">
    <location>
        <begin position="182"/>
        <end position="206"/>
    </location>
</feature>
<feature type="helix" evidence="2">
    <location>
        <begin position="210"/>
        <end position="241"/>
    </location>
</feature>
<feature type="helix" evidence="2">
    <location>
        <begin position="247"/>
        <end position="263"/>
    </location>
</feature>
<feature type="helix" evidence="2">
    <location>
        <begin position="265"/>
        <end position="268"/>
    </location>
</feature>
<feature type="helix" evidence="2">
    <location>
        <begin position="269"/>
        <end position="274"/>
    </location>
</feature>
<feature type="turn" evidence="2">
    <location>
        <begin position="276"/>
        <end position="278"/>
    </location>
</feature>
<feature type="strand" evidence="2">
    <location>
        <begin position="281"/>
        <end position="284"/>
    </location>
</feature>
<feature type="strand" evidence="2">
    <location>
        <begin position="290"/>
        <end position="292"/>
    </location>
</feature>
<feature type="turn" evidence="2">
    <location>
        <begin position="309"/>
        <end position="311"/>
    </location>
</feature>
<feature type="strand" evidence="2">
    <location>
        <begin position="312"/>
        <end position="314"/>
    </location>
</feature>
<feature type="helix" evidence="2">
    <location>
        <begin position="318"/>
        <end position="325"/>
    </location>
</feature>
<feature type="strand" evidence="2">
    <location>
        <begin position="334"/>
        <end position="344"/>
    </location>
</feature>
<feature type="strand" evidence="2">
    <location>
        <begin position="347"/>
        <end position="364"/>
    </location>
</feature>
<feature type="strand" evidence="2">
    <location>
        <begin position="371"/>
        <end position="376"/>
    </location>
</feature>
<feature type="strand" evidence="2">
    <location>
        <begin position="385"/>
        <end position="388"/>
    </location>
</feature>
<feature type="strand" evidence="2">
    <location>
        <begin position="393"/>
        <end position="405"/>
    </location>
</feature>
<feature type="strand" evidence="2">
    <location>
        <begin position="410"/>
        <end position="422"/>
    </location>
</feature>
<feature type="turn" evidence="2">
    <location>
        <begin position="424"/>
        <end position="426"/>
    </location>
</feature>
<feature type="strand" evidence="2">
    <location>
        <begin position="429"/>
        <end position="435"/>
    </location>
</feature>
<feature type="strand" evidence="2">
    <location>
        <begin position="438"/>
        <end position="447"/>
    </location>
</feature>
<feature type="helix" evidence="2">
    <location>
        <begin position="448"/>
        <end position="451"/>
    </location>
</feature>
<feature type="helix" evidence="2">
    <location>
        <begin position="461"/>
        <end position="464"/>
    </location>
</feature>
<feature type="strand" evidence="2">
    <location>
        <begin position="467"/>
        <end position="477"/>
    </location>
</feature>
<feature type="strand" evidence="2">
    <location>
        <begin position="480"/>
        <end position="489"/>
    </location>
</feature>
<feature type="strand" evidence="2">
    <location>
        <begin position="500"/>
        <end position="507"/>
    </location>
</feature>
<feature type="helix" evidence="2">
    <location>
        <begin position="508"/>
        <end position="510"/>
    </location>
</feature>
<organism>
    <name type="scientific">Bacillus thuringiensis</name>
    <dbReference type="NCBI Taxonomy" id="1428"/>
    <lineage>
        <taxon>Bacteria</taxon>
        <taxon>Bacillati</taxon>
        <taxon>Bacillota</taxon>
        <taxon>Bacilli</taxon>
        <taxon>Bacillales</taxon>
        <taxon>Bacillaceae</taxon>
        <taxon>Bacillus</taxon>
        <taxon>Bacillus cereus group</taxon>
    </lineage>
</organism>
<comment type="function">
    <text>Promotes colloidosmotic lysis by binding to the midgut epithelial cells of many lepidopteran larvae.</text>
</comment>
<comment type="developmental stage">
    <text>The crystal protein is produced during sporulation and is accumulated both as an inclusion and as part of the spore coat.</text>
</comment>
<comment type="miscellaneous">
    <text>Toxic segment of the protein is located in the N-terminus.</text>
</comment>
<comment type="similarity">
    <text evidence="1">Belongs to the delta endotoxin family.</text>
</comment>
<sequence length="1227" mass="139085">MTSNRKNENEIINALSIPAVSNHSAQMNLSTDARIEDSLCIAEGNNIDPFVSASTVQTGINIAGRILGVLGVPFAGQIASFYSFLVGELWPRGRDPWEIFLEHVEQLIRQQVTENTRDTALARLQGLGNSFRAYQQSLEDWLENRDDARTRSVLYTQYIALELDFLNAMPLFAIRNQEVPLLMVYAQAANLHLLLLRDASLFGSEFGLTSQEIQRYYERQVEKTREYSDYCARWYNTGLNNLRGTNAESWLRYNQFRRDLTLGVLDLVALFPSYDTRVYPMNTSAQLTREIYTDPIGRTNAPSGFASTNWFNNNAPSFSAIEAAVIRPPHLLDFPEQLTIFSVLSRWSNTQYMNYWVGHRLESRTIRGSLSTSTHGNTNTSINPVTLQFTSRDVYRTESFAGINILLTTPVNGVPWARFNWRNPLNSLRGSLLYTIGYTGVGTQLFDSETELPPETTERPNYESYSHRLSNIRLISGNTLRAPVYSWTHRSADRTNTISSDSITQIPLVKSFNLNSGTSVVSGPGFTGGDIIRTNVNGSVLSMGLNFNNTSLQRYRVRVRYAASQTMVLRVTVGGSTTFDQGFPSTMSANESLTSQSFRFAEFPVGISASGSQTAGISISNNAGRQTFHFDKIEFIPITATFEAEYDLERAQEAVNALFTNTNPRRLKTGVTDYHIDEVSNLVACLSDEFCLDEKRELLEKVKYAKRLSDERNLLQDPNFTSINKQPDFISTNEQSNFTSIHEQSEHGWWGSENITIQEGNDVFKENYVILPGTFNECYPTYLYQKIGEAELKAYTRYQLSGYIEDSQDLEIYLIRYNAKHETLDVPGTESVWPLSVESPIGRCGEPNRCAPHFEWNPDLDCSCRDGEKCAHHSHHFSLDIDVGCIDLHENLGVWVVFKIKTQEGHARLGNLEFIEEKPLLGEALSRVKRAEKKWRDKREKLQLETKRVYTEAKEAVDALFVDSQYDRLQADTNIGMIHAADKLVHRIREAYLSELSVIPGVNAEIFEELEGRIITAISLYDARNVVKNGDFNNGLACWNVKGHVDVQQSHHRSVLVIPEWEAEVSQAVRVCPGRGYILRVTAYKEGYGEGCVTIHEIENNTDELKFKNCEEEEVYPTDTGTCNDYTAHQGTAACNSRNAGYEDAYEVDTTASVNYKPTYEEETYTDVRRDNHCEYDRGYVNYPPVPAGYMTKELEYFPETDKVWIEIGETEGKFIVDSVELLLMEE</sequence>
<geneLocation type="plasmid">
    <name>pMYC2383</name>
</geneLocation>
<proteinExistence type="evidence at protein level"/>
<keyword id="KW-0002">3D-structure</keyword>
<keyword id="KW-0614">Plasmid</keyword>
<keyword id="KW-0749">Sporulation</keyword>
<keyword id="KW-0800">Toxin</keyword>
<keyword id="KW-0843">Virulence</keyword>
<protein>
    <recommendedName>
        <fullName>Pesticidal crystal protein Cry1Be</fullName>
    </recommendedName>
    <alternativeName>
        <fullName>139 kDa crystal protein</fullName>
    </alternativeName>
    <alternativeName>
        <fullName>Crystaline entomocidal protoxin</fullName>
    </alternativeName>
    <alternativeName>
        <fullName>Insecticidal delta-endotoxin CryIB(e)</fullName>
    </alternativeName>
</protein>
<name>CR1BE_BACTU</name>
<gene>
    <name type="primary">cry1Be</name>
    <name type="synonym">158C2B</name>
    <name type="synonym">cryIB(e)</name>
</gene>
<reference key="1">
    <citation type="patent" date="1998-03-03" number="US5723758">
        <title>Bacillus thuringiensis genes encoding lepidopteran-active toxins.</title>
        <authorList>
            <person name="Payne J.M."/>
            <person name="Cummings D.A."/>
            <person name="Cannon R.J.C."/>
            <person name="Narva K.E."/>
            <person name="Stelman S."/>
        </authorList>
    </citation>
    <scope>NUCLEOTIDE SEQUENCE [GENOMIC DNA]</scope>
    <source>
        <strain>NRRL B-18872 / PS158C2</strain>
    </source>
</reference>
<evidence type="ECO:0000305" key="1"/>
<evidence type="ECO:0007829" key="2">
    <source>
        <dbReference type="PDB" id="6OWK"/>
    </source>
</evidence>
<accession>O85805</accession>